<evidence type="ECO:0000250" key="1">
    <source>
        <dbReference type="UniProtKB" id="P26281"/>
    </source>
</evidence>
<evidence type="ECO:0000305" key="2"/>
<gene>
    <name type="primary">folK</name>
    <name type="synonym">folA</name>
    <name type="ordered locus">MexAM1_META1p1743</name>
</gene>
<proteinExistence type="inferred from homology"/>
<feature type="chain" id="PRO_0000168253" description="2-amino-4-hydroxy-6-hydroxymethyldihydropteridine pyrophosphokinase">
    <location>
        <begin position="1"/>
        <end position="158"/>
    </location>
</feature>
<feature type="sequence conflict" description="In Ref. 1; AAB58893." evidence="2" ref="1">
    <original>R</original>
    <variation>P</variation>
    <location>
        <position position="87"/>
    </location>
</feature>
<sequence length="158" mass="17206">MTRAYLGLGSNIGDKAAMLAGAVEHLAATPGIRVVARSADYRTPPWGDTDQDWFLNAAVAIDTELTPHGLLEVCLSIEAALGRVRERRWGPRVIDIDVLAYEGAQVSDERLVLPHRFVRERAFVLVPLAEIAPDLVIGGETVREALAKLDPSGIERVE</sequence>
<comment type="function">
    <text evidence="1">Catalyzes the transfer of pyrophosphate from adenosine triphosphate (ATP) to 6-hydroxymethyl-7,8-dihydropterin, an enzymatic step in folate biosynthesis pathway.</text>
</comment>
<comment type="catalytic activity">
    <reaction evidence="1">
        <text>6-hydroxymethyl-7,8-dihydropterin + ATP = (7,8-dihydropterin-6-yl)methyl diphosphate + AMP + H(+)</text>
        <dbReference type="Rhea" id="RHEA:11412"/>
        <dbReference type="ChEBI" id="CHEBI:15378"/>
        <dbReference type="ChEBI" id="CHEBI:30616"/>
        <dbReference type="ChEBI" id="CHEBI:44841"/>
        <dbReference type="ChEBI" id="CHEBI:72950"/>
        <dbReference type="ChEBI" id="CHEBI:456215"/>
        <dbReference type="EC" id="2.7.6.3"/>
    </reaction>
</comment>
<comment type="pathway">
    <text evidence="1">Cofactor biosynthesis; tetrahydrofolate biosynthesis; 2-amino-4-hydroxy-6-hydroxymethyl-7,8-dihydropteridine diphosphate from 7,8-dihydroneopterin triphosphate: step 4/4.</text>
</comment>
<comment type="similarity">
    <text evidence="2">Belongs to the HPPK family.</text>
</comment>
<accession>P71512</accession>
<accession>C5B123</accession>
<dbReference type="EC" id="2.7.6.3" evidence="1"/>
<dbReference type="EMBL" id="U72662">
    <property type="protein sequence ID" value="AAB58893.1"/>
    <property type="molecule type" value="Genomic_DNA"/>
</dbReference>
<dbReference type="EMBL" id="CP001510">
    <property type="protein sequence ID" value="ACS39587.1"/>
    <property type="molecule type" value="Genomic_DNA"/>
</dbReference>
<dbReference type="RefSeq" id="WP_003597615.1">
    <property type="nucleotide sequence ID" value="NC_012808.1"/>
</dbReference>
<dbReference type="SMR" id="P71512"/>
<dbReference type="STRING" id="272630.MexAM1_META1p1743"/>
<dbReference type="KEGG" id="mea:Mex_1p1743"/>
<dbReference type="eggNOG" id="COG0801">
    <property type="taxonomic scope" value="Bacteria"/>
</dbReference>
<dbReference type="HOGENOM" id="CLU_097916_2_3_5"/>
<dbReference type="OrthoDB" id="9808041at2"/>
<dbReference type="UniPathway" id="UPA00077">
    <property type="reaction ID" value="UER00155"/>
</dbReference>
<dbReference type="Proteomes" id="UP000009081">
    <property type="component" value="Chromosome"/>
</dbReference>
<dbReference type="GO" id="GO:0003848">
    <property type="term" value="F:2-amino-4-hydroxy-6-hydroxymethyldihydropteridine diphosphokinase activity"/>
    <property type="evidence" value="ECO:0007669"/>
    <property type="project" value="UniProtKB-EC"/>
</dbReference>
<dbReference type="GO" id="GO:0005524">
    <property type="term" value="F:ATP binding"/>
    <property type="evidence" value="ECO:0007669"/>
    <property type="project" value="UniProtKB-KW"/>
</dbReference>
<dbReference type="GO" id="GO:0016301">
    <property type="term" value="F:kinase activity"/>
    <property type="evidence" value="ECO:0007669"/>
    <property type="project" value="UniProtKB-KW"/>
</dbReference>
<dbReference type="GO" id="GO:0046656">
    <property type="term" value="P:folic acid biosynthetic process"/>
    <property type="evidence" value="ECO:0007669"/>
    <property type="project" value="UniProtKB-KW"/>
</dbReference>
<dbReference type="GO" id="GO:0046654">
    <property type="term" value="P:tetrahydrofolate biosynthetic process"/>
    <property type="evidence" value="ECO:0007669"/>
    <property type="project" value="UniProtKB-UniPathway"/>
</dbReference>
<dbReference type="CDD" id="cd00483">
    <property type="entry name" value="HPPK"/>
    <property type="match status" value="1"/>
</dbReference>
<dbReference type="Gene3D" id="3.30.70.560">
    <property type="entry name" value="7,8-Dihydro-6-hydroxymethylpterin-pyrophosphokinase HPPK"/>
    <property type="match status" value="1"/>
</dbReference>
<dbReference type="InterPro" id="IPR000550">
    <property type="entry name" value="Hppk"/>
</dbReference>
<dbReference type="InterPro" id="IPR035907">
    <property type="entry name" value="Hppk_sf"/>
</dbReference>
<dbReference type="NCBIfam" id="TIGR01498">
    <property type="entry name" value="folK"/>
    <property type="match status" value="1"/>
</dbReference>
<dbReference type="PANTHER" id="PTHR43071">
    <property type="entry name" value="2-AMINO-4-HYDROXY-6-HYDROXYMETHYLDIHYDROPTERIDINE PYROPHOSPHOKINASE"/>
    <property type="match status" value="1"/>
</dbReference>
<dbReference type="PANTHER" id="PTHR43071:SF1">
    <property type="entry name" value="2-AMINO-4-HYDROXY-6-HYDROXYMETHYLDIHYDROPTERIDINE PYROPHOSPHOKINASE"/>
    <property type="match status" value="1"/>
</dbReference>
<dbReference type="Pfam" id="PF01288">
    <property type="entry name" value="HPPK"/>
    <property type="match status" value="1"/>
</dbReference>
<dbReference type="SUPFAM" id="SSF55083">
    <property type="entry name" value="6-hydroxymethyl-7,8-dihydropterin pyrophosphokinase, HPPK"/>
    <property type="match status" value="1"/>
</dbReference>
<dbReference type="PROSITE" id="PS00794">
    <property type="entry name" value="HPPK"/>
    <property type="match status" value="1"/>
</dbReference>
<name>HPPK_METEA</name>
<reference key="1">
    <citation type="journal article" date="1997" name="Microbiology">
        <title>Molecular and mutational analysis of a DNA region separating two methylotrophy gene clusters in Methylobacterium extorquens AM1.</title>
        <authorList>
            <person name="Chistoserdova L.V."/>
            <person name="Lidstrom M.E."/>
        </authorList>
    </citation>
    <scope>NUCLEOTIDE SEQUENCE [GENOMIC DNA]</scope>
</reference>
<reference key="2">
    <citation type="journal article" date="2009" name="PLoS ONE">
        <title>Methylobacterium genome sequences: a reference blueprint to investigate microbial metabolism of C1 compounds from natural and industrial sources.</title>
        <authorList>
            <person name="Vuilleumier S."/>
            <person name="Chistoserdova L."/>
            <person name="Lee M.-C."/>
            <person name="Bringel F."/>
            <person name="Lajus A."/>
            <person name="Zhou Y."/>
            <person name="Gourion B."/>
            <person name="Barbe V."/>
            <person name="Chang J."/>
            <person name="Cruveiller S."/>
            <person name="Dossat C."/>
            <person name="Gillett W."/>
            <person name="Gruffaz C."/>
            <person name="Haugen E."/>
            <person name="Hourcade E."/>
            <person name="Levy R."/>
            <person name="Mangenot S."/>
            <person name="Muller E."/>
            <person name="Nadalig T."/>
            <person name="Pagni M."/>
            <person name="Penny C."/>
            <person name="Peyraud R."/>
            <person name="Robinson D.G."/>
            <person name="Roche D."/>
            <person name="Rouy Z."/>
            <person name="Saenampechek C."/>
            <person name="Salvignol G."/>
            <person name="Vallenet D."/>
            <person name="Wu Z."/>
            <person name="Marx C.J."/>
            <person name="Vorholt J.A."/>
            <person name="Olson M.V."/>
            <person name="Kaul R."/>
            <person name="Weissenbach J."/>
            <person name="Medigue C."/>
            <person name="Lidstrom M.E."/>
        </authorList>
    </citation>
    <scope>NUCLEOTIDE SEQUENCE [LARGE SCALE GENOMIC DNA]</scope>
    <source>
        <strain>ATCC 14718 / DSM 1338 / JCM 2805 / NCIMB 9133 / AM1</strain>
    </source>
</reference>
<protein>
    <recommendedName>
        <fullName evidence="1">2-amino-4-hydroxy-6-hydroxymethyldihydropteridine pyrophosphokinase</fullName>
        <ecNumber evidence="1">2.7.6.3</ecNumber>
    </recommendedName>
    <alternativeName>
        <fullName evidence="1">6-hydroxymethyl-7,8-dihydropterin pyrophosphokinase</fullName>
        <shortName evidence="1">PPPK</shortName>
    </alternativeName>
    <alternativeName>
        <fullName evidence="1">7,8-dihydro-6-hydroxymethylpterin-pyrophosphokinase</fullName>
        <shortName evidence="1">HPPK</shortName>
    </alternativeName>
</protein>
<keyword id="KW-0067">ATP-binding</keyword>
<keyword id="KW-0289">Folate biosynthesis</keyword>
<keyword id="KW-0418">Kinase</keyword>
<keyword id="KW-0547">Nucleotide-binding</keyword>
<keyword id="KW-1185">Reference proteome</keyword>
<keyword id="KW-0808">Transferase</keyword>
<organism>
    <name type="scientific">Methylorubrum extorquens (strain ATCC 14718 / DSM 1338 / JCM 2805 / NCIMB 9133 / AM1)</name>
    <name type="common">Methylobacterium extorquens</name>
    <dbReference type="NCBI Taxonomy" id="272630"/>
    <lineage>
        <taxon>Bacteria</taxon>
        <taxon>Pseudomonadati</taxon>
        <taxon>Pseudomonadota</taxon>
        <taxon>Alphaproteobacteria</taxon>
        <taxon>Hyphomicrobiales</taxon>
        <taxon>Methylobacteriaceae</taxon>
        <taxon>Methylorubrum</taxon>
    </lineage>
</organism>